<keyword id="KW-0903">Direct protein sequencing</keyword>
<keyword id="KW-1015">Disulfide bond</keyword>
<keyword id="KW-0872">Ion channel impairing toxin</keyword>
<keyword id="KW-0528">Neurotoxin</keyword>
<keyword id="KW-0964">Secreted</keyword>
<keyword id="KW-0732">Signal</keyword>
<keyword id="KW-0800">Toxin</keyword>
<keyword id="KW-0738">Voltage-gated sodium channel impairing toxin</keyword>
<sequence length="84" mass="9068">MNYLVMISLALLLMTGVESVRDGYIVDSKNCVYHCVPPCDGLCKKNGAKSGSCGFLIPSGLACWCVALPDNVPIKDPSYKCHSR</sequence>
<evidence type="ECO:0000255" key="1">
    <source>
        <dbReference type="PROSITE-ProRule" id="PRU01210"/>
    </source>
</evidence>
<evidence type="ECO:0000269" key="2">
    <source>
    </source>
</evidence>
<evidence type="ECO:0000269" key="3">
    <source>
    </source>
</evidence>
<evidence type="ECO:0000303" key="4">
    <source>
    </source>
</evidence>
<evidence type="ECO:0000305" key="5"/>
<comment type="function">
    <text>Alpha toxins bind voltage-independently at site-3 of sodium channels (Nav) and inhibit the inactivation of the activated channels, thereby blocking neuronal transmission.</text>
</comment>
<comment type="subcellular location">
    <subcellularLocation>
        <location>Secreted</location>
    </subcellularLocation>
</comment>
<comment type="tissue specificity">
    <text>Expressed by the venom gland.</text>
</comment>
<comment type="domain">
    <text evidence="5">Has the structural arrangement of an alpha-helix connected to antiparallel beta-sheets by disulfide bonds (CS-alpha/beta).</text>
</comment>
<comment type="toxic dose">
    <text evidence="2">LD(50) is 0.35 pg/kg by intracerebroventricular injection into mice.</text>
</comment>
<comment type="similarity">
    <text evidence="5">Belongs to the long (4 C-C) scorpion toxin superfamily. Sodium channel inhibitor family. Alpha subfamily.</text>
</comment>
<accession>P01480</accession>
<name>SCX3_ANDAU</name>
<organism>
    <name type="scientific">Androctonus australis</name>
    <name type="common">Sahara scorpion</name>
    <dbReference type="NCBI Taxonomy" id="6858"/>
    <lineage>
        <taxon>Eukaryota</taxon>
        <taxon>Metazoa</taxon>
        <taxon>Ecdysozoa</taxon>
        <taxon>Arthropoda</taxon>
        <taxon>Chelicerata</taxon>
        <taxon>Arachnida</taxon>
        <taxon>Scorpiones</taxon>
        <taxon>Buthida</taxon>
        <taxon>Buthoidea</taxon>
        <taxon>Buthidae</taxon>
        <taxon>Androctonus</taxon>
    </lineage>
</organism>
<proteinExistence type="evidence at protein level"/>
<reference key="1">
    <citation type="journal article" date="1989" name="J. Biol. Chem.">
        <title>Precursors of Androctonus australis scorpion neurotoxins. Structures of precursors, processing outcomes, and expression of a functional recombinant toxin II.</title>
        <authorList>
            <person name="Bougis P.E."/>
            <person name="Rochat H."/>
            <person name="Smith L.A."/>
        </authorList>
    </citation>
    <scope>NUCLEOTIDE SEQUENCE [MRNA]</scope>
    <source>
        <strain>Hector</strain>
    </source>
</reference>
<reference key="2">
    <citation type="journal article" date="1979" name="Eur. J. Biochem.">
        <title>Amino acid sequence of neurotoxin III of the scorpion Androctonus austrialis Hector.</title>
        <authorList>
            <person name="Kopeyan C."/>
            <person name="Martinez G."/>
            <person name="Rochat H."/>
        </authorList>
    </citation>
    <scope>PROTEIN SEQUENCE OF 20-83</scope>
    <source>
        <strain>Hector</strain>
        <tissue>Venom</tissue>
    </source>
</reference>
<reference key="3">
    <citation type="journal article" date="1991" name="Biochemistry">
        <title>An anti-insect toxin purified from the scorpion Androctonus australis hector also acts on the alpha- and beta-sites of the mammalian sodium channel: sequence and circular dichroism study.</title>
        <authorList>
            <person name="Loret E.P."/>
            <person name="Martin-Eauclaire M.-F."/>
            <person name="Mansuelle P."/>
            <person name="Sampieri F."/>
            <person name="Granier C."/>
            <person name="Rochat H."/>
        </authorList>
    </citation>
    <scope>TOXIC DOSE</scope>
</reference>
<reference key="4">
    <citation type="journal article" date="1990" name="Int. J. Pept. Protein Res.">
        <title>Rapid determination and NMR assignments of antiparallel sheets and helices of a scorpion and a cobra toxin.</title>
        <authorList>
            <person name="Laplante S.R."/>
            <person name="Mikou A."/>
            <person name="Robin M."/>
            <person name="Guittet E."/>
            <person name="Delsuc M.-A."/>
            <person name="Charpentier I."/>
            <person name="Lallemand J.-Y."/>
        </authorList>
    </citation>
    <scope>STRUCTURE BY NMR</scope>
    <scope>DISULFIDE BONDS</scope>
    <source>
        <strain>Hector</strain>
    </source>
</reference>
<reference key="5">
    <citation type="journal article" date="1992" name="J. Biomol. NMR">
        <title>Toxin III of the scorpion Androctonus australis hector: proton nuclear magnetic resonance assignments and secondary structure.</title>
        <authorList>
            <person name="Mikou A."/>
            <person name="Laplante S.R."/>
            <person name="Guittet E."/>
            <person name="Lallemand J.-Y."/>
            <person name="Martin-Eauclaire M.-F."/>
            <person name="Rochat H."/>
        </authorList>
    </citation>
    <scope>STRUCTURE BY NMR</scope>
    <scope>DISULFIDE BONDS</scope>
    <source>
        <strain>Hector</strain>
    </source>
</reference>
<protein>
    <recommendedName>
        <fullName>Alpha-mammal toxin Aah3</fullName>
    </recommendedName>
    <alternativeName>
        <fullName evidence="4">AaH III</fullName>
        <shortName>AaHIII</shortName>
    </alternativeName>
    <alternativeName>
        <fullName>Neurotoxin 3</fullName>
    </alternativeName>
    <alternativeName>
        <fullName>Neurotoxin III</fullName>
    </alternativeName>
</protein>
<dbReference type="EMBL" id="M27703">
    <property type="protein sequence ID" value="AAA29948.1"/>
    <property type="molecule type" value="mRNA"/>
</dbReference>
<dbReference type="PIR" id="C34444">
    <property type="entry name" value="NTSR3A"/>
</dbReference>
<dbReference type="BMRB" id="P01480"/>
<dbReference type="SMR" id="P01480"/>
<dbReference type="GO" id="GO:0005576">
    <property type="term" value="C:extracellular region"/>
    <property type="evidence" value="ECO:0007669"/>
    <property type="project" value="UniProtKB-SubCell"/>
</dbReference>
<dbReference type="GO" id="GO:0019871">
    <property type="term" value="F:sodium channel inhibitor activity"/>
    <property type="evidence" value="ECO:0007669"/>
    <property type="project" value="InterPro"/>
</dbReference>
<dbReference type="GO" id="GO:0090729">
    <property type="term" value="F:toxin activity"/>
    <property type="evidence" value="ECO:0007669"/>
    <property type="project" value="UniProtKB-KW"/>
</dbReference>
<dbReference type="GO" id="GO:0006952">
    <property type="term" value="P:defense response"/>
    <property type="evidence" value="ECO:0007669"/>
    <property type="project" value="InterPro"/>
</dbReference>
<dbReference type="CDD" id="cd23106">
    <property type="entry name" value="neurotoxins_LC_scorpion"/>
    <property type="match status" value="1"/>
</dbReference>
<dbReference type="Gene3D" id="3.30.30.10">
    <property type="entry name" value="Knottin, scorpion toxin-like"/>
    <property type="match status" value="1"/>
</dbReference>
<dbReference type="InterPro" id="IPR044062">
    <property type="entry name" value="LCN-type_CS_alpha_beta_dom"/>
</dbReference>
<dbReference type="InterPro" id="IPR003614">
    <property type="entry name" value="Scorpion_toxin-like"/>
</dbReference>
<dbReference type="InterPro" id="IPR036574">
    <property type="entry name" value="Scorpion_toxin-like_sf"/>
</dbReference>
<dbReference type="InterPro" id="IPR002061">
    <property type="entry name" value="Scorpion_toxinL/defensin"/>
</dbReference>
<dbReference type="Pfam" id="PF00537">
    <property type="entry name" value="Toxin_3"/>
    <property type="match status" value="1"/>
</dbReference>
<dbReference type="SMART" id="SM00505">
    <property type="entry name" value="Knot1"/>
    <property type="match status" value="1"/>
</dbReference>
<dbReference type="SUPFAM" id="SSF57095">
    <property type="entry name" value="Scorpion toxin-like"/>
    <property type="match status" value="1"/>
</dbReference>
<dbReference type="PROSITE" id="PS51863">
    <property type="entry name" value="LCN_CSAB"/>
    <property type="match status" value="1"/>
</dbReference>
<feature type="signal peptide" evidence="3">
    <location>
        <begin position="1"/>
        <end position="19"/>
    </location>
</feature>
<feature type="chain" id="PRO_0000035221" description="Alpha-mammal toxin Aah3">
    <location>
        <begin position="20"/>
        <end position="83"/>
    </location>
</feature>
<feature type="propeptide" id="PRO_0000035222" description="Removed by a carboxypeptidase">
    <location>
        <position position="84"/>
    </location>
</feature>
<feature type="domain" description="LCN-type CS-alpha/beta" evidence="1">
    <location>
        <begin position="21"/>
        <end position="82"/>
    </location>
</feature>
<feature type="disulfide bond" evidence="1">
    <location>
        <begin position="31"/>
        <end position="81"/>
    </location>
</feature>
<feature type="disulfide bond" evidence="1">
    <location>
        <begin position="35"/>
        <end position="53"/>
    </location>
</feature>
<feature type="disulfide bond" evidence="1">
    <location>
        <begin position="39"/>
        <end position="63"/>
    </location>
</feature>
<feature type="disulfide bond" evidence="1">
    <location>
        <begin position="43"/>
        <end position="65"/>
    </location>
</feature>
<feature type="sequence conflict" description="In Ref. 2; AA sequence." evidence="5" ref="2">
    <original>D</original>
    <variation>N</variation>
    <location>
        <position position="27"/>
    </location>
</feature>